<keyword id="KW-0066">ATP synthesis</keyword>
<keyword id="KW-1003">Cell membrane</keyword>
<keyword id="KW-0139">CF(1)</keyword>
<keyword id="KW-0375">Hydrogen ion transport</keyword>
<keyword id="KW-0406">Ion transport</keyword>
<keyword id="KW-0472">Membrane</keyword>
<keyword id="KW-0813">Transport</keyword>
<gene>
    <name evidence="1" type="primary">atpG</name>
    <name type="ordered locus">SP70585_1546</name>
</gene>
<feature type="chain" id="PRO_1000148639" description="ATP synthase gamma chain">
    <location>
        <begin position="1"/>
        <end position="292"/>
    </location>
</feature>
<comment type="function">
    <text evidence="1">Produces ATP from ADP in the presence of a proton gradient across the membrane. The gamma chain is believed to be important in regulating ATPase activity and the flow of protons through the CF(0) complex.</text>
</comment>
<comment type="subunit">
    <text evidence="1">F-type ATPases have 2 components, CF(1) - the catalytic core - and CF(0) - the membrane proton channel. CF(1) has five subunits: alpha(3), beta(3), gamma(1), delta(1), epsilon(1). CF(0) has three main subunits: a, b and c.</text>
</comment>
<comment type="subcellular location">
    <subcellularLocation>
        <location evidence="1">Cell membrane</location>
        <topology evidence="1">Peripheral membrane protein</topology>
    </subcellularLocation>
</comment>
<comment type="similarity">
    <text evidence="1">Belongs to the ATPase gamma chain family.</text>
</comment>
<reference key="1">
    <citation type="journal article" date="2010" name="Genome Biol.">
        <title>Structure and dynamics of the pan-genome of Streptococcus pneumoniae and closely related species.</title>
        <authorList>
            <person name="Donati C."/>
            <person name="Hiller N.L."/>
            <person name="Tettelin H."/>
            <person name="Muzzi A."/>
            <person name="Croucher N.J."/>
            <person name="Angiuoli S.V."/>
            <person name="Oggioni M."/>
            <person name="Dunning Hotopp J.C."/>
            <person name="Hu F.Z."/>
            <person name="Riley D.R."/>
            <person name="Covacci A."/>
            <person name="Mitchell T.J."/>
            <person name="Bentley S.D."/>
            <person name="Kilian M."/>
            <person name="Ehrlich G.D."/>
            <person name="Rappuoli R."/>
            <person name="Moxon E.R."/>
            <person name="Masignani V."/>
        </authorList>
    </citation>
    <scope>NUCLEOTIDE SEQUENCE [LARGE SCALE GENOMIC DNA]</scope>
    <source>
        <strain>70585</strain>
    </source>
</reference>
<protein>
    <recommendedName>
        <fullName evidence="1">ATP synthase gamma chain</fullName>
    </recommendedName>
    <alternativeName>
        <fullName evidence="1">ATP synthase F1 sector gamma subunit</fullName>
    </alternativeName>
    <alternativeName>
        <fullName evidence="1">F-ATPase gamma subunit</fullName>
    </alternativeName>
</protein>
<evidence type="ECO:0000255" key="1">
    <source>
        <dbReference type="HAMAP-Rule" id="MF_00815"/>
    </source>
</evidence>
<organism>
    <name type="scientific">Streptococcus pneumoniae (strain 70585)</name>
    <dbReference type="NCBI Taxonomy" id="488221"/>
    <lineage>
        <taxon>Bacteria</taxon>
        <taxon>Bacillati</taxon>
        <taxon>Bacillota</taxon>
        <taxon>Bacilli</taxon>
        <taxon>Lactobacillales</taxon>
        <taxon>Streptococcaceae</taxon>
        <taxon>Streptococcus</taxon>
    </lineage>
</organism>
<proteinExistence type="inferred from homology"/>
<sequence length="292" mass="32309">MAVSLNDIKTKIASTKNTSQITNAMQMVSAAKLGRSEEAARNFQVYAQKVRKLLTDILHGNGAGASTNPMLISRSVKKTGYIVITSDRGLVGGYNSSILKAVMELKEEYHPDGKGFEMICIGGMGADFFKARGIQPLYELRGLADQPSFDQVRKIISKTVEMYQNELFDELYVCYNHHVNTLTSQMRVEQMLPIVDLDPNEADEEYSLTFELETSREEILEQLLPQFAESMIYGAIIDAKTAENAAGMTAMQTATDNAKKVINDLTIQYNRARQAAITQEITEIVAGASALE</sequence>
<dbReference type="EMBL" id="CP000918">
    <property type="protein sequence ID" value="ACO16795.1"/>
    <property type="molecule type" value="Genomic_DNA"/>
</dbReference>
<dbReference type="RefSeq" id="WP_000301210.1">
    <property type="nucleotide sequence ID" value="NC_012468.1"/>
</dbReference>
<dbReference type="SMR" id="C1C8A0"/>
<dbReference type="KEGG" id="snm:SP70585_1546"/>
<dbReference type="HOGENOM" id="CLU_050669_0_1_9"/>
<dbReference type="Proteomes" id="UP000002211">
    <property type="component" value="Chromosome"/>
</dbReference>
<dbReference type="GO" id="GO:0005886">
    <property type="term" value="C:plasma membrane"/>
    <property type="evidence" value="ECO:0007669"/>
    <property type="project" value="UniProtKB-SubCell"/>
</dbReference>
<dbReference type="GO" id="GO:0045259">
    <property type="term" value="C:proton-transporting ATP synthase complex"/>
    <property type="evidence" value="ECO:0007669"/>
    <property type="project" value="UniProtKB-KW"/>
</dbReference>
<dbReference type="GO" id="GO:0005524">
    <property type="term" value="F:ATP binding"/>
    <property type="evidence" value="ECO:0007669"/>
    <property type="project" value="UniProtKB-UniRule"/>
</dbReference>
<dbReference type="GO" id="GO:0046933">
    <property type="term" value="F:proton-transporting ATP synthase activity, rotational mechanism"/>
    <property type="evidence" value="ECO:0007669"/>
    <property type="project" value="UniProtKB-UniRule"/>
</dbReference>
<dbReference type="GO" id="GO:0042777">
    <property type="term" value="P:proton motive force-driven plasma membrane ATP synthesis"/>
    <property type="evidence" value="ECO:0007669"/>
    <property type="project" value="UniProtKB-UniRule"/>
</dbReference>
<dbReference type="CDD" id="cd12151">
    <property type="entry name" value="F1-ATPase_gamma"/>
    <property type="match status" value="1"/>
</dbReference>
<dbReference type="FunFam" id="3.40.1380.10:FF:000002">
    <property type="entry name" value="ATP synthase gamma chain"/>
    <property type="match status" value="1"/>
</dbReference>
<dbReference type="Gene3D" id="3.40.1380.10">
    <property type="match status" value="1"/>
</dbReference>
<dbReference type="Gene3D" id="1.10.287.80">
    <property type="entry name" value="ATP synthase, gamma subunit, helix hairpin domain"/>
    <property type="match status" value="1"/>
</dbReference>
<dbReference type="HAMAP" id="MF_00815">
    <property type="entry name" value="ATP_synth_gamma_bact"/>
    <property type="match status" value="1"/>
</dbReference>
<dbReference type="InterPro" id="IPR035968">
    <property type="entry name" value="ATP_synth_F1_ATPase_gsu"/>
</dbReference>
<dbReference type="InterPro" id="IPR000131">
    <property type="entry name" value="ATP_synth_F1_gsu"/>
</dbReference>
<dbReference type="InterPro" id="IPR023632">
    <property type="entry name" value="ATP_synth_F1_gsu_CS"/>
</dbReference>
<dbReference type="NCBIfam" id="TIGR01146">
    <property type="entry name" value="ATPsyn_F1gamma"/>
    <property type="match status" value="1"/>
</dbReference>
<dbReference type="NCBIfam" id="NF004147">
    <property type="entry name" value="PRK05621.2-1"/>
    <property type="match status" value="1"/>
</dbReference>
<dbReference type="PANTHER" id="PTHR11693">
    <property type="entry name" value="ATP SYNTHASE GAMMA CHAIN"/>
    <property type="match status" value="1"/>
</dbReference>
<dbReference type="PANTHER" id="PTHR11693:SF22">
    <property type="entry name" value="ATP SYNTHASE SUBUNIT GAMMA, MITOCHONDRIAL"/>
    <property type="match status" value="1"/>
</dbReference>
<dbReference type="Pfam" id="PF00231">
    <property type="entry name" value="ATP-synt"/>
    <property type="match status" value="1"/>
</dbReference>
<dbReference type="PRINTS" id="PR00126">
    <property type="entry name" value="ATPASEGAMMA"/>
</dbReference>
<dbReference type="SUPFAM" id="SSF52943">
    <property type="entry name" value="ATP synthase (F1-ATPase), gamma subunit"/>
    <property type="match status" value="1"/>
</dbReference>
<dbReference type="PROSITE" id="PS00153">
    <property type="entry name" value="ATPASE_GAMMA"/>
    <property type="match status" value="1"/>
</dbReference>
<accession>C1C8A0</accession>
<name>ATPG_STRP7</name>